<evidence type="ECO:0000255" key="1">
    <source>
        <dbReference type="HAMAP-Rule" id="MF_01396"/>
    </source>
</evidence>
<name>ATPL_STAAB</name>
<feature type="chain" id="PRO_1000184498" description="ATP synthase subunit c">
    <location>
        <begin position="1"/>
        <end position="70"/>
    </location>
</feature>
<feature type="transmembrane region" description="Helical" evidence="1">
    <location>
        <begin position="4"/>
        <end position="24"/>
    </location>
</feature>
<feature type="transmembrane region" description="Helical" evidence="1">
    <location>
        <begin position="45"/>
        <end position="65"/>
    </location>
</feature>
<feature type="site" description="Reversibly protonated during proton transport" evidence="1">
    <location>
        <position position="54"/>
    </location>
</feature>
<proteinExistence type="inferred from homology"/>
<organism>
    <name type="scientific">Staphylococcus aureus (strain bovine RF122 / ET3-1)</name>
    <dbReference type="NCBI Taxonomy" id="273036"/>
    <lineage>
        <taxon>Bacteria</taxon>
        <taxon>Bacillati</taxon>
        <taxon>Bacillota</taxon>
        <taxon>Bacilli</taxon>
        <taxon>Bacillales</taxon>
        <taxon>Staphylococcaceae</taxon>
        <taxon>Staphylococcus</taxon>
    </lineage>
</organism>
<reference key="1">
    <citation type="journal article" date="2007" name="PLoS ONE">
        <title>Molecular correlates of host specialization in Staphylococcus aureus.</title>
        <authorList>
            <person name="Herron-Olson L."/>
            <person name="Fitzgerald J.R."/>
            <person name="Musser J.M."/>
            <person name="Kapur V."/>
        </authorList>
    </citation>
    <scope>NUCLEOTIDE SEQUENCE [LARGE SCALE GENOMIC DNA]</scope>
    <source>
        <strain>bovine RF122 / ET3-1</strain>
    </source>
</reference>
<accession>Q2YUJ6</accession>
<dbReference type="EMBL" id="AJ938182">
    <property type="protein sequence ID" value="CAI81681.1"/>
    <property type="molecule type" value="Genomic_DNA"/>
</dbReference>
<dbReference type="RefSeq" id="WP_001048816.1">
    <property type="nucleotide sequence ID" value="NC_007622.1"/>
</dbReference>
<dbReference type="SMR" id="Q2YUJ6"/>
<dbReference type="GeneID" id="98346415"/>
<dbReference type="KEGG" id="sab:SAB1992c"/>
<dbReference type="HOGENOM" id="CLU_148047_1_1_9"/>
<dbReference type="GO" id="GO:0005886">
    <property type="term" value="C:plasma membrane"/>
    <property type="evidence" value="ECO:0007669"/>
    <property type="project" value="UniProtKB-SubCell"/>
</dbReference>
<dbReference type="GO" id="GO:0045259">
    <property type="term" value="C:proton-transporting ATP synthase complex"/>
    <property type="evidence" value="ECO:0007669"/>
    <property type="project" value="UniProtKB-KW"/>
</dbReference>
<dbReference type="GO" id="GO:0033177">
    <property type="term" value="C:proton-transporting two-sector ATPase complex, proton-transporting domain"/>
    <property type="evidence" value="ECO:0007669"/>
    <property type="project" value="InterPro"/>
</dbReference>
<dbReference type="GO" id="GO:0008289">
    <property type="term" value="F:lipid binding"/>
    <property type="evidence" value="ECO:0007669"/>
    <property type="project" value="UniProtKB-KW"/>
</dbReference>
<dbReference type="GO" id="GO:0046933">
    <property type="term" value="F:proton-transporting ATP synthase activity, rotational mechanism"/>
    <property type="evidence" value="ECO:0007669"/>
    <property type="project" value="UniProtKB-UniRule"/>
</dbReference>
<dbReference type="CDD" id="cd18185">
    <property type="entry name" value="ATP-synt_Fo_c_ATPE"/>
    <property type="match status" value="1"/>
</dbReference>
<dbReference type="FunFam" id="1.20.20.10:FF:000004">
    <property type="entry name" value="ATP synthase subunit c"/>
    <property type="match status" value="1"/>
</dbReference>
<dbReference type="Gene3D" id="1.20.20.10">
    <property type="entry name" value="F1F0 ATP synthase subunit C"/>
    <property type="match status" value="1"/>
</dbReference>
<dbReference type="HAMAP" id="MF_01396">
    <property type="entry name" value="ATP_synth_c_bact"/>
    <property type="match status" value="1"/>
</dbReference>
<dbReference type="InterPro" id="IPR005953">
    <property type="entry name" value="ATP_synth_csu_bac/chlpt"/>
</dbReference>
<dbReference type="InterPro" id="IPR000454">
    <property type="entry name" value="ATP_synth_F0_csu"/>
</dbReference>
<dbReference type="InterPro" id="IPR020537">
    <property type="entry name" value="ATP_synth_F0_csu_DDCD_BS"/>
</dbReference>
<dbReference type="InterPro" id="IPR038662">
    <property type="entry name" value="ATP_synth_F0_csu_sf"/>
</dbReference>
<dbReference type="InterPro" id="IPR002379">
    <property type="entry name" value="ATPase_proteolipid_c-like_dom"/>
</dbReference>
<dbReference type="InterPro" id="IPR035921">
    <property type="entry name" value="F/V-ATP_Csub_sf"/>
</dbReference>
<dbReference type="NCBIfam" id="TIGR01260">
    <property type="entry name" value="ATP_synt_c"/>
    <property type="match status" value="1"/>
</dbReference>
<dbReference type="NCBIfam" id="NF005363">
    <property type="entry name" value="PRK06876.1"/>
    <property type="match status" value="1"/>
</dbReference>
<dbReference type="Pfam" id="PF00137">
    <property type="entry name" value="ATP-synt_C"/>
    <property type="match status" value="1"/>
</dbReference>
<dbReference type="PRINTS" id="PR00124">
    <property type="entry name" value="ATPASEC"/>
</dbReference>
<dbReference type="SUPFAM" id="SSF81333">
    <property type="entry name" value="F1F0 ATP synthase subunit C"/>
    <property type="match status" value="1"/>
</dbReference>
<dbReference type="PROSITE" id="PS00605">
    <property type="entry name" value="ATPASE_C"/>
    <property type="match status" value="1"/>
</dbReference>
<comment type="function">
    <text evidence="1">F(1)F(0) ATP synthase produces ATP from ADP in the presence of a proton or sodium gradient. F-type ATPases consist of two structural domains, F(1) containing the extramembraneous catalytic core and F(0) containing the membrane proton channel, linked together by a central stalk and a peripheral stalk. During catalysis, ATP synthesis in the catalytic domain of F(1) is coupled via a rotary mechanism of the central stalk subunits to proton translocation.</text>
</comment>
<comment type="function">
    <text evidence="1">Key component of the F(0) channel; it plays a direct role in translocation across the membrane. A homomeric c-ring of between 10-14 subunits forms the central stalk rotor element with the F(1) delta and epsilon subunits.</text>
</comment>
<comment type="subunit">
    <text evidence="1">F-type ATPases have 2 components, F(1) - the catalytic core - and F(0) - the membrane proton channel. F(1) has five subunits: alpha(3), beta(3), gamma(1), delta(1), epsilon(1). F(0) has three main subunits: a(1), b(2) and c(10-14). The alpha and beta chains form an alternating ring which encloses part of the gamma chain. F(1) is attached to F(0) by a central stalk formed by the gamma and epsilon chains, while a peripheral stalk is formed by the delta and b chains.</text>
</comment>
<comment type="subcellular location">
    <subcellularLocation>
        <location evidence="1">Cell membrane</location>
        <topology evidence="1">Multi-pass membrane protein</topology>
    </subcellularLocation>
</comment>
<comment type="similarity">
    <text evidence="1">Belongs to the ATPase C chain family.</text>
</comment>
<gene>
    <name evidence="1" type="primary">atpE</name>
    <name type="ordered locus">SAB1992c</name>
</gene>
<sequence>MNLIAAAIAIGLSALGAGIGNGLIVSRTVEGVARQPEARGQLMGIMFIGVGLVEALPIIGVVIAFMTFAG</sequence>
<protein>
    <recommendedName>
        <fullName evidence="1">ATP synthase subunit c</fullName>
    </recommendedName>
    <alternativeName>
        <fullName evidence="1">ATP synthase F(0) sector subunit c</fullName>
    </alternativeName>
    <alternativeName>
        <fullName evidence="1">F-type ATPase subunit c</fullName>
        <shortName evidence="1">F-ATPase subunit c</shortName>
    </alternativeName>
    <alternativeName>
        <fullName evidence="1">Lipid-binding protein</fullName>
    </alternativeName>
</protein>
<keyword id="KW-0066">ATP synthesis</keyword>
<keyword id="KW-1003">Cell membrane</keyword>
<keyword id="KW-0138">CF(0)</keyword>
<keyword id="KW-0375">Hydrogen ion transport</keyword>
<keyword id="KW-0406">Ion transport</keyword>
<keyword id="KW-0446">Lipid-binding</keyword>
<keyword id="KW-0472">Membrane</keyword>
<keyword id="KW-0812">Transmembrane</keyword>
<keyword id="KW-1133">Transmembrane helix</keyword>
<keyword id="KW-0813">Transport</keyword>